<feature type="chain" id="PRO_0000366430" description="Elongation factor 1-beta">
    <location>
        <begin position="1"/>
        <end position="89"/>
    </location>
</feature>
<proteinExistence type="inferred from homology"/>
<comment type="function">
    <text evidence="1">Promotes the exchange of GDP for GTP in EF-1-alpha/GDP, thus allowing the regeneration of EF-1-alpha/GTP that could then be used to form the ternary complex EF-1-alpha/GTP/AAtRNA.</text>
</comment>
<comment type="similarity">
    <text evidence="1">Belongs to the EF-1-beta/EF-1-delta family.</text>
</comment>
<comment type="sequence caution" evidence="2">
    <conflict type="erroneous initiation">
        <sequence resource="EMBL-CDS" id="ABR54618"/>
    </conflict>
</comment>
<protein>
    <recommendedName>
        <fullName evidence="1">Elongation factor 1-beta</fullName>
        <shortName evidence="1">EF-1-beta</shortName>
    </recommendedName>
    <alternativeName>
        <fullName evidence="1">aEF-1beta</fullName>
    </alternativeName>
</protein>
<name>EF1B_METVS</name>
<gene>
    <name evidence="1" type="primary">ef1b</name>
    <name type="ordered locus">Mevan_0712</name>
</gene>
<keyword id="KW-0251">Elongation factor</keyword>
<keyword id="KW-0648">Protein biosynthesis</keyword>
<accession>A6UQ46</accession>
<dbReference type="EMBL" id="CP000742">
    <property type="protein sequence ID" value="ABR54618.1"/>
    <property type="status" value="ALT_INIT"/>
    <property type="molecule type" value="Genomic_DNA"/>
</dbReference>
<dbReference type="RefSeq" id="WP_048059145.1">
    <property type="nucleotide sequence ID" value="NC_009634.1"/>
</dbReference>
<dbReference type="SMR" id="A6UQ46"/>
<dbReference type="STRING" id="406327.Mevan_0712"/>
<dbReference type="GeneID" id="5326194"/>
<dbReference type="KEGG" id="mvn:Mevan_0712"/>
<dbReference type="eggNOG" id="arCOG01988">
    <property type="taxonomic scope" value="Archaea"/>
</dbReference>
<dbReference type="HOGENOM" id="CLU_165896_0_0_2"/>
<dbReference type="OrthoDB" id="84643at2157"/>
<dbReference type="Proteomes" id="UP000001107">
    <property type="component" value="Chromosome"/>
</dbReference>
<dbReference type="GO" id="GO:0003746">
    <property type="term" value="F:translation elongation factor activity"/>
    <property type="evidence" value="ECO:0007669"/>
    <property type="project" value="UniProtKB-UniRule"/>
</dbReference>
<dbReference type="CDD" id="cd00292">
    <property type="entry name" value="EF1B"/>
    <property type="match status" value="1"/>
</dbReference>
<dbReference type="Gene3D" id="3.30.70.60">
    <property type="match status" value="1"/>
</dbReference>
<dbReference type="HAMAP" id="MF_00043">
    <property type="entry name" value="EF1_beta"/>
    <property type="match status" value="1"/>
</dbReference>
<dbReference type="InterPro" id="IPR036219">
    <property type="entry name" value="eEF-1beta-like_sf"/>
</dbReference>
<dbReference type="InterPro" id="IPR014038">
    <property type="entry name" value="EF1B_bsu/dsu_GNE"/>
</dbReference>
<dbReference type="InterPro" id="IPR014717">
    <property type="entry name" value="Transl_elong_EF1B/ribsomal_bS6"/>
</dbReference>
<dbReference type="InterPro" id="IPR004542">
    <property type="entry name" value="Transl_elong_EF1B_B_arc"/>
</dbReference>
<dbReference type="NCBIfam" id="TIGR00489">
    <property type="entry name" value="aEF-1_beta"/>
    <property type="match status" value="1"/>
</dbReference>
<dbReference type="NCBIfam" id="NF001670">
    <property type="entry name" value="PRK00435.1"/>
    <property type="match status" value="1"/>
</dbReference>
<dbReference type="PANTHER" id="PTHR39647">
    <property type="entry name" value="ELONGATION FACTOR 1-BETA"/>
    <property type="match status" value="1"/>
</dbReference>
<dbReference type="PANTHER" id="PTHR39647:SF1">
    <property type="entry name" value="ELONGATION FACTOR 1-BETA"/>
    <property type="match status" value="1"/>
</dbReference>
<dbReference type="Pfam" id="PF00736">
    <property type="entry name" value="EF1_GNE"/>
    <property type="match status" value="1"/>
</dbReference>
<dbReference type="SMART" id="SM00888">
    <property type="entry name" value="EF1_GNE"/>
    <property type="match status" value="1"/>
</dbReference>
<dbReference type="SUPFAM" id="SSF54984">
    <property type="entry name" value="eEF-1beta-like"/>
    <property type="match status" value="1"/>
</dbReference>
<reference key="1">
    <citation type="submission" date="2007-06" db="EMBL/GenBank/DDBJ databases">
        <title>Complete sequence of Methanococcus vannielii SB.</title>
        <authorList>
            <consortium name="US DOE Joint Genome Institute"/>
            <person name="Copeland A."/>
            <person name="Lucas S."/>
            <person name="Lapidus A."/>
            <person name="Barry K."/>
            <person name="Glavina del Rio T."/>
            <person name="Dalin E."/>
            <person name="Tice H."/>
            <person name="Pitluck S."/>
            <person name="Chain P."/>
            <person name="Malfatti S."/>
            <person name="Shin M."/>
            <person name="Vergez L."/>
            <person name="Schmutz J."/>
            <person name="Larimer F."/>
            <person name="Land M."/>
            <person name="Hauser L."/>
            <person name="Kyrpides N."/>
            <person name="Anderson I."/>
            <person name="Sieprawska-Lupa M."/>
            <person name="Whitman W.B."/>
            <person name="Richardson P."/>
        </authorList>
    </citation>
    <scope>NUCLEOTIDE SEQUENCE [LARGE SCALE GENOMIC DNA]</scope>
    <source>
        <strain>ATCC 35089 / DSM 1224 / JCM 13029 / OCM 148 / SB</strain>
    </source>
</reference>
<evidence type="ECO:0000255" key="1">
    <source>
        <dbReference type="HAMAP-Rule" id="MF_00043"/>
    </source>
</evidence>
<evidence type="ECO:0000305" key="2"/>
<sequence>MATVIAKIKAMPTSPEINKETLKESLKELVEKFGAKCRGVIDEPLAFGLYSVFIMVEMEEQEGGMDPIEEAMNALDDVESAEVVELSLV</sequence>
<organism>
    <name type="scientific">Methanococcus vannielii (strain ATCC 35089 / DSM 1224 / JCM 13029 / OCM 148 / SB)</name>
    <dbReference type="NCBI Taxonomy" id="406327"/>
    <lineage>
        <taxon>Archaea</taxon>
        <taxon>Methanobacteriati</taxon>
        <taxon>Methanobacteriota</taxon>
        <taxon>Methanomada group</taxon>
        <taxon>Methanococci</taxon>
        <taxon>Methanococcales</taxon>
        <taxon>Methanococcaceae</taxon>
        <taxon>Methanococcus</taxon>
    </lineage>
</organism>